<sequence>MAVAMDNAILENILRQVRPLIGQGKVADYIPALATVDGSRLGIAICTVDGQLFQAGDAQERFSIQSISKVLSLVVAMRHYSEEEIWQRVGKDPSGSPFNSLVQLEMEQGIPRNPFINAGALVVCDMLQGRLSAPRQRMLEVVRGLSGVSDISYDTVVARSEFEHSARNAAIAWLMKSFGNFHHDVTTVLQNYFHYCALKMSCVELARTFVFLANQGKAIHIDEPVVTPMQARQINALMATSGMYQNAGEFAWRVGLPAKSGVGGGIVAIVPHEMAIAVWSPELDDAGNSLAGIAVLEQLTKQLGRSVY</sequence>
<name>GLSA2_ECOL6</name>
<proteinExistence type="inferred from homology"/>
<organism>
    <name type="scientific">Escherichia coli O6:H1 (strain CFT073 / ATCC 700928 / UPEC)</name>
    <dbReference type="NCBI Taxonomy" id="199310"/>
    <lineage>
        <taxon>Bacteria</taxon>
        <taxon>Pseudomonadati</taxon>
        <taxon>Pseudomonadota</taxon>
        <taxon>Gammaproteobacteria</taxon>
        <taxon>Enterobacterales</taxon>
        <taxon>Enterobacteriaceae</taxon>
        <taxon>Escherichia</taxon>
    </lineage>
</organism>
<feature type="chain" id="PRO_0000110612" description="Glutaminase 2">
    <location>
        <begin position="1"/>
        <end position="308"/>
    </location>
</feature>
<feature type="binding site" evidence="1">
    <location>
        <position position="66"/>
    </location>
    <ligand>
        <name>substrate</name>
    </ligand>
</feature>
<feature type="binding site" evidence="1">
    <location>
        <position position="117"/>
    </location>
    <ligand>
        <name>substrate</name>
    </ligand>
</feature>
<feature type="binding site" evidence="1">
    <location>
        <position position="161"/>
    </location>
    <ligand>
        <name>substrate</name>
    </ligand>
</feature>
<feature type="binding site" evidence="1">
    <location>
        <position position="168"/>
    </location>
    <ligand>
        <name>substrate</name>
    </ligand>
</feature>
<feature type="binding site" evidence="1">
    <location>
        <position position="192"/>
    </location>
    <ligand>
        <name>substrate</name>
    </ligand>
</feature>
<feature type="binding site" evidence="1">
    <location>
        <position position="244"/>
    </location>
    <ligand>
        <name>substrate</name>
    </ligand>
</feature>
<feature type="binding site" evidence="1">
    <location>
        <position position="262"/>
    </location>
    <ligand>
        <name>substrate</name>
    </ligand>
</feature>
<protein>
    <recommendedName>
        <fullName evidence="1">Glutaminase 2</fullName>
        <ecNumber evidence="1">3.5.1.2</ecNumber>
    </recommendedName>
</protein>
<evidence type="ECO:0000255" key="1">
    <source>
        <dbReference type="HAMAP-Rule" id="MF_00313"/>
    </source>
</evidence>
<gene>
    <name evidence="1" type="primary">glsA2</name>
    <name type="ordered locus">c1947</name>
</gene>
<accession>P0A6W1</accession>
<accession>P77470</accession>
<keyword id="KW-0378">Hydrolase</keyword>
<keyword id="KW-1185">Reference proteome</keyword>
<dbReference type="EC" id="3.5.1.2" evidence="1"/>
<dbReference type="EMBL" id="AE014075">
    <property type="protein sequence ID" value="AAN80404.1"/>
    <property type="molecule type" value="Genomic_DNA"/>
</dbReference>
<dbReference type="SMR" id="P0A6W1"/>
<dbReference type="STRING" id="199310.c1947"/>
<dbReference type="KEGG" id="ecc:c1947"/>
<dbReference type="eggNOG" id="COG2066">
    <property type="taxonomic scope" value="Bacteria"/>
</dbReference>
<dbReference type="HOGENOM" id="CLU_027932_1_1_6"/>
<dbReference type="BioCyc" id="ECOL199310:C1947-MONOMER"/>
<dbReference type="Proteomes" id="UP000001410">
    <property type="component" value="Chromosome"/>
</dbReference>
<dbReference type="GO" id="GO:0004359">
    <property type="term" value="F:glutaminase activity"/>
    <property type="evidence" value="ECO:0007669"/>
    <property type="project" value="UniProtKB-UniRule"/>
</dbReference>
<dbReference type="GO" id="GO:0006537">
    <property type="term" value="P:glutamate biosynthetic process"/>
    <property type="evidence" value="ECO:0007669"/>
    <property type="project" value="TreeGrafter"/>
</dbReference>
<dbReference type="GO" id="GO:0006543">
    <property type="term" value="P:glutamine catabolic process"/>
    <property type="evidence" value="ECO:0007669"/>
    <property type="project" value="TreeGrafter"/>
</dbReference>
<dbReference type="FunFam" id="3.40.710.10:FF:000005">
    <property type="entry name" value="Glutaminase"/>
    <property type="match status" value="1"/>
</dbReference>
<dbReference type="Gene3D" id="3.40.710.10">
    <property type="entry name" value="DD-peptidase/beta-lactamase superfamily"/>
    <property type="match status" value="1"/>
</dbReference>
<dbReference type="HAMAP" id="MF_00313">
    <property type="entry name" value="Glutaminase"/>
    <property type="match status" value="1"/>
</dbReference>
<dbReference type="InterPro" id="IPR012338">
    <property type="entry name" value="Beta-lactam/transpept-like"/>
</dbReference>
<dbReference type="InterPro" id="IPR015868">
    <property type="entry name" value="Glutaminase"/>
</dbReference>
<dbReference type="NCBIfam" id="TIGR03814">
    <property type="entry name" value="Gln_ase"/>
    <property type="match status" value="1"/>
</dbReference>
<dbReference type="NCBIfam" id="NF002132">
    <property type="entry name" value="PRK00971.1-1"/>
    <property type="match status" value="1"/>
</dbReference>
<dbReference type="NCBIfam" id="NF002133">
    <property type="entry name" value="PRK00971.1-2"/>
    <property type="match status" value="1"/>
</dbReference>
<dbReference type="PANTHER" id="PTHR12544">
    <property type="entry name" value="GLUTAMINASE"/>
    <property type="match status" value="1"/>
</dbReference>
<dbReference type="PANTHER" id="PTHR12544:SF29">
    <property type="entry name" value="GLUTAMINASE"/>
    <property type="match status" value="1"/>
</dbReference>
<dbReference type="Pfam" id="PF04960">
    <property type="entry name" value="Glutaminase"/>
    <property type="match status" value="1"/>
</dbReference>
<dbReference type="SUPFAM" id="SSF56601">
    <property type="entry name" value="beta-lactamase/transpeptidase-like"/>
    <property type="match status" value="1"/>
</dbReference>
<reference key="1">
    <citation type="journal article" date="2002" name="Proc. Natl. Acad. Sci. U.S.A.">
        <title>Extensive mosaic structure revealed by the complete genome sequence of uropathogenic Escherichia coli.</title>
        <authorList>
            <person name="Welch R.A."/>
            <person name="Burland V."/>
            <person name="Plunkett G. III"/>
            <person name="Redford P."/>
            <person name="Roesch P."/>
            <person name="Rasko D."/>
            <person name="Buckles E.L."/>
            <person name="Liou S.-R."/>
            <person name="Boutin A."/>
            <person name="Hackett J."/>
            <person name="Stroud D."/>
            <person name="Mayhew G.F."/>
            <person name="Rose D.J."/>
            <person name="Zhou S."/>
            <person name="Schwartz D.C."/>
            <person name="Perna N.T."/>
            <person name="Mobley H.L.T."/>
            <person name="Donnenberg M.S."/>
            <person name="Blattner F.R."/>
        </authorList>
    </citation>
    <scope>NUCLEOTIDE SEQUENCE [LARGE SCALE GENOMIC DNA]</scope>
    <source>
        <strain>CFT073 / ATCC 700928 / UPEC</strain>
    </source>
</reference>
<comment type="catalytic activity">
    <reaction evidence="1">
        <text>L-glutamine + H2O = L-glutamate + NH4(+)</text>
        <dbReference type="Rhea" id="RHEA:15889"/>
        <dbReference type="ChEBI" id="CHEBI:15377"/>
        <dbReference type="ChEBI" id="CHEBI:28938"/>
        <dbReference type="ChEBI" id="CHEBI:29985"/>
        <dbReference type="ChEBI" id="CHEBI:58359"/>
        <dbReference type="EC" id="3.5.1.2"/>
    </reaction>
</comment>
<comment type="subunit">
    <text evidence="1">Homotetramer.</text>
</comment>
<comment type="similarity">
    <text evidence="1">Belongs to the glutaminase family.</text>
</comment>